<proteinExistence type="inferred from homology"/>
<accession>B4SWP5</accession>
<name>QUEA_SALNS</name>
<sequence>MRVTDFSFELPESLIAHYPQPERSRCRLLSLEGPTGALTHGTFTDLLDKLNPGDLLVFNNTRVIPARLFGRKASGGKIEVLVERMLDDKRILAHIRASKAPKPGTELLLGDDESIHATMTARHGALFEVEFNDPRPVLDILNAIGHMPLPPYIDRPDEDADRELYQTVYSEKPGAVAAPTAGLHFDEPLLAALREKGVEMAFVTLHVGAGTFQPVRVDTIEDHIMHSEYAEVPQEVVDAVLVAKVRGNRVIAVGTTSVRSLESAAQAAKSDLIEPFFGDTQIFIYPGYQYKVIDALITNFHLPESTLIMLVSAFAGYQHTMNAYKTAVEQKYRFFSYGDAMFITYNPQAIFERP</sequence>
<organism>
    <name type="scientific">Salmonella newport (strain SL254)</name>
    <dbReference type="NCBI Taxonomy" id="423368"/>
    <lineage>
        <taxon>Bacteria</taxon>
        <taxon>Pseudomonadati</taxon>
        <taxon>Pseudomonadota</taxon>
        <taxon>Gammaproteobacteria</taxon>
        <taxon>Enterobacterales</taxon>
        <taxon>Enterobacteriaceae</taxon>
        <taxon>Salmonella</taxon>
    </lineage>
</organism>
<protein>
    <recommendedName>
        <fullName evidence="1">S-adenosylmethionine:tRNA ribosyltransferase-isomerase</fullName>
        <ecNumber evidence="1">2.4.99.17</ecNumber>
    </recommendedName>
    <alternativeName>
        <fullName evidence="1">Queuosine biosynthesis protein QueA</fullName>
    </alternativeName>
</protein>
<dbReference type="EC" id="2.4.99.17" evidence="1"/>
<dbReference type="EMBL" id="CP001113">
    <property type="protein sequence ID" value="ACF64704.1"/>
    <property type="molecule type" value="Genomic_DNA"/>
</dbReference>
<dbReference type="RefSeq" id="WP_001266535.1">
    <property type="nucleotide sequence ID" value="NZ_CCMR01000003.1"/>
</dbReference>
<dbReference type="SMR" id="B4SWP5"/>
<dbReference type="KEGG" id="see:SNSL254_A0449"/>
<dbReference type="HOGENOM" id="CLU_039110_1_0_6"/>
<dbReference type="UniPathway" id="UPA00392"/>
<dbReference type="Proteomes" id="UP000008824">
    <property type="component" value="Chromosome"/>
</dbReference>
<dbReference type="GO" id="GO:0005737">
    <property type="term" value="C:cytoplasm"/>
    <property type="evidence" value="ECO:0007669"/>
    <property type="project" value="UniProtKB-SubCell"/>
</dbReference>
<dbReference type="GO" id="GO:0051075">
    <property type="term" value="F:S-adenosylmethionine:tRNA ribosyltransferase-isomerase activity"/>
    <property type="evidence" value="ECO:0007669"/>
    <property type="project" value="UniProtKB-EC"/>
</dbReference>
<dbReference type="GO" id="GO:0008616">
    <property type="term" value="P:queuosine biosynthetic process"/>
    <property type="evidence" value="ECO:0007669"/>
    <property type="project" value="UniProtKB-UniRule"/>
</dbReference>
<dbReference type="GO" id="GO:0002099">
    <property type="term" value="P:tRNA wobble guanine modification"/>
    <property type="evidence" value="ECO:0007669"/>
    <property type="project" value="TreeGrafter"/>
</dbReference>
<dbReference type="FunFam" id="2.40.10.240:FF:000001">
    <property type="entry name" value="S-adenosylmethionine:tRNA ribosyltransferase-isomerase"/>
    <property type="match status" value="1"/>
</dbReference>
<dbReference type="FunFam" id="3.40.1780.10:FF:000001">
    <property type="entry name" value="S-adenosylmethionine:tRNA ribosyltransferase-isomerase"/>
    <property type="match status" value="1"/>
</dbReference>
<dbReference type="Gene3D" id="2.40.10.240">
    <property type="entry name" value="QueA-like"/>
    <property type="match status" value="1"/>
</dbReference>
<dbReference type="Gene3D" id="3.40.1780.10">
    <property type="entry name" value="QueA-like"/>
    <property type="match status" value="1"/>
</dbReference>
<dbReference type="HAMAP" id="MF_00113">
    <property type="entry name" value="QueA"/>
    <property type="match status" value="1"/>
</dbReference>
<dbReference type="InterPro" id="IPR003699">
    <property type="entry name" value="QueA"/>
</dbReference>
<dbReference type="InterPro" id="IPR042118">
    <property type="entry name" value="QueA_dom1"/>
</dbReference>
<dbReference type="InterPro" id="IPR042119">
    <property type="entry name" value="QueA_dom2"/>
</dbReference>
<dbReference type="InterPro" id="IPR036100">
    <property type="entry name" value="QueA_sf"/>
</dbReference>
<dbReference type="NCBIfam" id="NF001140">
    <property type="entry name" value="PRK00147.1"/>
    <property type="match status" value="1"/>
</dbReference>
<dbReference type="NCBIfam" id="TIGR00113">
    <property type="entry name" value="queA"/>
    <property type="match status" value="1"/>
</dbReference>
<dbReference type="PANTHER" id="PTHR30307">
    <property type="entry name" value="S-ADENOSYLMETHIONINE:TRNA RIBOSYLTRANSFERASE-ISOMERASE"/>
    <property type="match status" value="1"/>
</dbReference>
<dbReference type="PANTHER" id="PTHR30307:SF0">
    <property type="entry name" value="S-ADENOSYLMETHIONINE:TRNA RIBOSYLTRANSFERASE-ISOMERASE"/>
    <property type="match status" value="1"/>
</dbReference>
<dbReference type="Pfam" id="PF02547">
    <property type="entry name" value="Queuosine_synth"/>
    <property type="match status" value="1"/>
</dbReference>
<dbReference type="SUPFAM" id="SSF111337">
    <property type="entry name" value="QueA-like"/>
    <property type="match status" value="1"/>
</dbReference>
<evidence type="ECO:0000255" key="1">
    <source>
        <dbReference type="HAMAP-Rule" id="MF_00113"/>
    </source>
</evidence>
<reference key="1">
    <citation type="journal article" date="2011" name="J. Bacteriol.">
        <title>Comparative genomics of 28 Salmonella enterica isolates: evidence for CRISPR-mediated adaptive sublineage evolution.</title>
        <authorList>
            <person name="Fricke W.F."/>
            <person name="Mammel M.K."/>
            <person name="McDermott P.F."/>
            <person name="Tartera C."/>
            <person name="White D.G."/>
            <person name="Leclerc J.E."/>
            <person name="Ravel J."/>
            <person name="Cebula T.A."/>
        </authorList>
    </citation>
    <scope>NUCLEOTIDE SEQUENCE [LARGE SCALE GENOMIC DNA]</scope>
    <source>
        <strain>SL254</strain>
    </source>
</reference>
<keyword id="KW-0963">Cytoplasm</keyword>
<keyword id="KW-0671">Queuosine biosynthesis</keyword>
<keyword id="KW-0949">S-adenosyl-L-methionine</keyword>
<keyword id="KW-0808">Transferase</keyword>
<feature type="chain" id="PRO_1000094814" description="S-adenosylmethionine:tRNA ribosyltransferase-isomerase">
    <location>
        <begin position="1"/>
        <end position="354"/>
    </location>
</feature>
<gene>
    <name evidence="1" type="primary">queA</name>
    <name type="ordered locus">SNSL254_A0449</name>
</gene>
<comment type="function">
    <text evidence="1">Transfers and isomerizes the ribose moiety from AdoMet to the 7-aminomethyl group of 7-deazaguanine (preQ1-tRNA) to give epoxyqueuosine (oQ-tRNA).</text>
</comment>
<comment type="catalytic activity">
    <reaction evidence="1">
        <text>7-aminomethyl-7-carbaguanosine(34) in tRNA + S-adenosyl-L-methionine = epoxyqueuosine(34) in tRNA + adenine + L-methionine + 2 H(+)</text>
        <dbReference type="Rhea" id="RHEA:32155"/>
        <dbReference type="Rhea" id="RHEA-COMP:10342"/>
        <dbReference type="Rhea" id="RHEA-COMP:18582"/>
        <dbReference type="ChEBI" id="CHEBI:15378"/>
        <dbReference type="ChEBI" id="CHEBI:16708"/>
        <dbReference type="ChEBI" id="CHEBI:57844"/>
        <dbReference type="ChEBI" id="CHEBI:59789"/>
        <dbReference type="ChEBI" id="CHEBI:82833"/>
        <dbReference type="ChEBI" id="CHEBI:194443"/>
        <dbReference type="EC" id="2.4.99.17"/>
    </reaction>
</comment>
<comment type="pathway">
    <text evidence="1">tRNA modification; tRNA-queuosine biosynthesis.</text>
</comment>
<comment type="subunit">
    <text evidence="1">Monomer.</text>
</comment>
<comment type="subcellular location">
    <subcellularLocation>
        <location evidence="1">Cytoplasm</location>
    </subcellularLocation>
</comment>
<comment type="similarity">
    <text evidence="1">Belongs to the QueA family.</text>
</comment>